<sequence length="2324" mass="266385">MDGQTRYLDELVGALRAERAQGRAGGYAGEFPPREGGGRARRVARTVVAKLADAEVADAAFWRACEALDLVFTGRPMVLAEALDEEAGVLWAVRSCWRVAAVHFGRRERGWALRRASSRWVRLCADLYGQRWRARVGAELDRELCAGEAAVRAVLGGGQEAGEHMRALRALCVAAEWAVSREFWFVTGGAERVGLRLQRLARLARYIGDAVELPLAEYEEVQVRLLGVSVQAYLEPDRPGLGELRFALEQLQYFVRGKHLRREFAAWSRLLLRLYVRCRSDRAALLLVREVLVLDAAELPEAATDAQRSLQLVRYDLERQFAADHALRWDPALRAKLLAAGTPPVILEPFTSNRQLEKLRLRVLCDFQVGDSALLVHQFSAAGVPLGADPVALYTHLDEGIARAFGRQDTEAQVRYLSLVRKLACLESRKPSPGFDCDLCDHTNLWLPRESIDPSRPEAASDSLAFKLLVGYYLREQLESSGEALVIGILITLRSIFTHFQPPKLVENHYGDMVDEHGCIQLFRMAFMSLNRHVRILSVLLIPYWNLSRSYNADEQQTALIIKFLQRNPDPHITETYLMAWTQLTLSTSGELFDSLLLKLIDIFNSSNFVEHVVMASQLKFIARVLNKTAYQLLSPILPILLKQIGKNLGEKKLSLERLLNLLEYSAKTVIENFQRYIVPYALTQYKGDALTEIAKIMCQNNEPSMVSEQKKRLLDRNSRQIFAVALVKHGLFSLETIETLFINNDPTFDRSYVAGFLPDYKTLAEVLKLFKPVEKVDSPMNDNERAVLSSLRFLFLTNFSVDKHRGSKFKNVTEWTQEKEAVFQKKLKDNILGIFQVFSSDMHDIEGKTTYFEKLRVISGISFLIKYASKECIISALAQVSICLQTGLEIPEMRYNTLRCWLHLVKYLSEEELSTVIDVLICFILQKWDEFSGKIQQAAIDILDALILEKQTLLTNSRPYIVLAFLNKSELHIFENHGFFARTASKLLKNTNWVSVFVSNLKSHNIYVIKQTLQDIRLFLEKKQDAGIDIKLISKDGKNISELLGALLDTSHKYRNSDLIICETCALCISMIGVLDVTKHELQRCNVYDNDICDFNNPTQTTKFLINIINERLVPSFWQSENPTKQLFVALVIQESLKYCGLSASSWDVTKPDLYPNESKLWNRFNDISKTTLYPLLSSLYLAQSWKEYVPLSYPSFKVKDGYSTWIKNLSLDLLKTATESSHPLHVFSSLIREDDGTLSDYLLPYIIMDIIIKAESGTKYFDYLQNVIKDFEYIFNYTLYDLNHYQIDGLKMCYDSIFRVFEYCKKWVNQFRQNYSKQHGTFTIREEKYTRMLNRAGKFADIIPSHVLAQKSLETNSFERSALYLEQSYREKSSNGLQDDKLLPYLQTTYAEINDIDAVVGVLKVFCSNNLTSRIEELQYSDNWKMAQDCFDALGDSLLNEQGGVENSVPTSRMLKLMYDHQLYDQTLKKLELNIPSKKRQLPLNLDEFYNMGIETASLSGNITELKIWIRRIEQLETLTDPSILLHYNLAKSLLAVLEGKTDMIETHSKYCYRLIGSHFTTPSHSTTLLKRRNLFIKLHGIRDNSILSKCSTDIQFNRSVRNLAVRFKNVGSDFEPNFYLLSMRKSHNLMRSEEFVKQDLADTYFKMAQLARENDRLDIASDCLMHALKLEHTEAELEYAEILWKQGEKELALKTVAEIHQKRKGIKTLKDRDRAKVLLKYTEWLDLSNNATSVQISHQYKEVIGLDKDWDEPYYSFGLYYSRLLEKKRADGFVTTGSLEYKAITYFLSAFEKNTVKVREALPKVITFWLDTASRSVESGSSEGEYHFKRYTKEICKCIDVAIQNCPTHIWYTVLTQLLSRLLHKHTDSATLIMNILLKLTLEYPSIMLWYITVLLNSQENKRVHAGKQIMDAIKKRMPDKSSLISSAISLVQAMTRVCIKDVKNMSSRSGKSLQNDFKFDINLAPSEMVVPVNINLANLSPSYADTSGKHGSSKRVTINCFTPHYKVYSSLKKPKKINIIGSDGELYGIMCKKEDVRQDNQYMQFANMMVFLLGKDSESRRRSLNITTYAILSLREDCGLIEIVPNVDTIRSILMAKYDSMKIKYTLSVLYEKWKSVSEEQRLGFYKSCTDTFPPVLYQWFLETFPNPIRWYNARNAFVRSYAVMAMVGHILGLGDRHLENILLDLQTGKVLHVDFDCLFEKGKTLPVPEIVPFRLTQNIQDAFGVTGTEGTFKKSSEVTVRVMRNNELALVNIIETIMYDRNMDHSIQNALRVLRNKVRGIDPRDDLPLSVPGQVDTVVQQASSDENLAQMYIGWLPFW</sequence>
<gene>
    <name type="primary">MEC1</name>
    <name type="ordered locus">ABR108C</name>
</gene>
<dbReference type="EC" id="2.7.11.1"/>
<dbReference type="EMBL" id="AE016815">
    <property type="protein sequence ID" value="AAS50879.2"/>
    <property type="molecule type" value="Genomic_DNA"/>
</dbReference>
<dbReference type="RefSeq" id="NP_983055.2">
    <property type="nucleotide sequence ID" value="NM_208408.2"/>
</dbReference>
<dbReference type="SMR" id="Q75DB8"/>
<dbReference type="FunCoup" id="Q75DB8">
    <property type="interactions" value="1299"/>
</dbReference>
<dbReference type="STRING" id="284811.Q75DB8"/>
<dbReference type="EnsemblFungi" id="AAS50879">
    <property type="protein sequence ID" value="AAS50879"/>
    <property type="gene ID" value="AGOS_ABR108C"/>
</dbReference>
<dbReference type="GeneID" id="4619161"/>
<dbReference type="KEGG" id="ago:AGOS_ABR108C"/>
<dbReference type="eggNOG" id="KOG0890">
    <property type="taxonomic scope" value="Eukaryota"/>
</dbReference>
<dbReference type="HOGENOM" id="CLU_000178_4_0_1"/>
<dbReference type="InParanoid" id="Q75DB8"/>
<dbReference type="OMA" id="NWLDESN"/>
<dbReference type="OrthoDB" id="381190at2759"/>
<dbReference type="Proteomes" id="UP000000591">
    <property type="component" value="Chromosome II"/>
</dbReference>
<dbReference type="GO" id="GO:0070310">
    <property type="term" value="C:ATR-ATRIP complex"/>
    <property type="evidence" value="ECO:0007669"/>
    <property type="project" value="EnsemblFungi"/>
</dbReference>
<dbReference type="GO" id="GO:0005694">
    <property type="term" value="C:chromosome"/>
    <property type="evidence" value="ECO:0000318"/>
    <property type="project" value="GO_Central"/>
</dbReference>
<dbReference type="GO" id="GO:0005634">
    <property type="term" value="C:nucleus"/>
    <property type="evidence" value="ECO:0000318"/>
    <property type="project" value="GO_Central"/>
</dbReference>
<dbReference type="GO" id="GO:0005524">
    <property type="term" value="F:ATP binding"/>
    <property type="evidence" value="ECO:0007669"/>
    <property type="project" value="UniProtKB-KW"/>
</dbReference>
<dbReference type="GO" id="GO:0106310">
    <property type="term" value="F:protein serine kinase activity"/>
    <property type="evidence" value="ECO:0007669"/>
    <property type="project" value="RHEA"/>
</dbReference>
<dbReference type="GO" id="GO:0004674">
    <property type="term" value="F:protein serine/threonine kinase activity"/>
    <property type="evidence" value="ECO:0000318"/>
    <property type="project" value="GO_Central"/>
</dbReference>
<dbReference type="GO" id="GO:0006325">
    <property type="term" value="P:chromatin organization"/>
    <property type="evidence" value="ECO:0007669"/>
    <property type="project" value="UniProtKB-KW"/>
</dbReference>
<dbReference type="GO" id="GO:0000077">
    <property type="term" value="P:DNA damage checkpoint signaling"/>
    <property type="evidence" value="ECO:0000318"/>
    <property type="project" value="GO_Central"/>
</dbReference>
<dbReference type="GO" id="GO:0006281">
    <property type="term" value="P:DNA repair"/>
    <property type="evidence" value="ECO:0000318"/>
    <property type="project" value="GO_Central"/>
</dbReference>
<dbReference type="GO" id="GO:0006260">
    <property type="term" value="P:DNA replication"/>
    <property type="evidence" value="ECO:0007669"/>
    <property type="project" value="EnsemblFungi"/>
</dbReference>
<dbReference type="GO" id="GO:2000105">
    <property type="term" value="P:positive regulation of DNA-templated DNA replication"/>
    <property type="evidence" value="ECO:0007669"/>
    <property type="project" value="EnsemblFungi"/>
</dbReference>
<dbReference type="GO" id="GO:0007131">
    <property type="term" value="P:reciprocal meiotic recombination"/>
    <property type="evidence" value="ECO:0007669"/>
    <property type="project" value="EnsemblFungi"/>
</dbReference>
<dbReference type="GO" id="GO:0000723">
    <property type="term" value="P:telomere maintenance"/>
    <property type="evidence" value="ECO:0000318"/>
    <property type="project" value="GO_Central"/>
</dbReference>
<dbReference type="GO" id="GO:0000722">
    <property type="term" value="P:telomere maintenance via recombination"/>
    <property type="evidence" value="ECO:0007669"/>
    <property type="project" value="EnsemblFungi"/>
</dbReference>
<dbReference type="CDD" id="cd00892">
    <property type="entry name" value="PIKKc_ATR"/>
    <property type="match status" value="1"/>
</dbReference>
<dbReference type="FunFam" id="1.10.1070.11:FF:000033">
    <property type="entry name" value="Serine/threonine-protein kinase MEC1"/>
    <property type="match status" value="1"/>
</dbReference>
<dbReference type="Gene3D" id="1.10.1070.11">
    <property type="entry name" value="Phosphatidylinositol 3-/4-kinase, catalytic domain"/>
    <property type="match status" value="1"/>
</dbReference>
<dbReference type="Gene3D" id="3.30.1010.10">
    <property type="entry name" value="Phosphatidylinositol 3-kinase Catalytic Subunit, Chain A, domain 4"/>
    <property type="match status" value="1"/>
</dbReference>
<dbReference type="Gene3D" id="1.25.40.10">
    <property type="entry name" value="Tetratricopeptide repeat domain"/>
    <property type="match status" value="1"/>
</dbReference>
<dbReference type="InterPro" id="IPR016024">
    <property type="entry name" value="ARM-type_fold"/>
</dbReference>
<dbReference type="InterPro" id="IPR056802">
    <property type="entry name" value="ATR-like_M-HEAT"/>
</dbReference>
<dbReference type="InterPro" id="IPR050517">
    <property type="entry name" value="DDR_Repair_Kinase"/>
</dbReference>
<dbReference type="InterPro" id="IPR003152">
    <property type="entry name" value="FATC_dom"/>
</dbReference>
<dbReference type="InterPro" id="IPR011009">
    <property type="entry name" value="Kinase-like_dom_sf"/>
</dbReference>
<dbReference type="InterPro" id="IPR000403">
    <property type="entry name" value="PI3/4_kinase_cat_dom"/>
</dbReference>
<dbReference type="InterPro" id="IPR036940">
    <property type="entry name" value="PI3/4_kinase_cat_sf"/>
</dbReference>
<dbReference type="InterPro" id="IPR018936">
    <property type="entry name" value="PI3/4_kinase_CS"/>
</dbReference>
<dbReference type="InterPro" id="IPR003151">
    <property type="entry name" value="PIK-rel_kinase_FAT"/>
</dbReference>
<dbReference type="InterPro" id="IPR014009">
    <property type="entry name" value="PIK_FAT"/>
</dbReference>
<dbReference type="InterPro" id="IPR011990">
    <property type="entry name" value="TPR-like_helical_dom_sf"/>
</dbReference>
<dbReference type="InterPro" id="IPR012993">
    <property type="entry name" value="UME"/>
</dbReference>
<dbReference type="PANTHER" id="PTHR11139">
    <property type="entry name" value="ATAXIA TELANGIECTASIA MUTATED ATM -RELATED"/>
    <property type="match status" value="1"/>
</dbReference>
<dbReference type="PANTHER" id="PTHR11139:SF125">
    <property type="entry name" value="SERINE_THREONINE-PROTEIN KINASE MEC1"/>
    <property type="match status" value="1"/>
</dbReference>
<dbReference type="Pfam" id="PF02259">
    <property type="entry name" value="FAT"/>
    <property type="match status" value="1"/>
</dbReference>
<dbReference type="Pfam" id="PF02260">
    <property type="entry name" value="FATC"/>
    <property type="match status" value="1"/>
</dbReference>
<dbReference type="Pfam" id="PF23593">
    <property type="entry name" value="HEAT_ATR"/>
    <property type="match status" value="1"/>
</dbReference>
<dbReference type="Pfam" id="PF25385">
    <property type="entry name" value="HEAT_MEC1_N"/>
    <property type="match status" value="1"/>
</dbReference>
<dbReference type="Pfam" id="PF25030">
    <property type="entry name" value="M-HEAT_ATR"/>
    <property type="match status" value="1"/>
</dbReference>
<dbReference type="Pfam" id="PF00454">
    <property type="entry name" value="PI3_PI4_kinase"/>
    <property type="match status" value="1"/>
</dbReference>
<dbReference type="Pfam" id="PF08064">
    <property type="entry name" value="UME"/>
    <property type="match status" value="1"/>
</dbReference>
<dbReference type="SMART" id="SM01343">
    <property type="entry name" value="FATC"/>
    <property type="match status" value="1"/>
</dbReference>
<dbReference type="SMART" id="SM00146">
    <property type="entry name" value="PI3Kc"/>
    <property type="match status" value="1"/>
</dbReference>
<dbReference type="SMART" id="SM00802">
    <property type="entry name" value="UME"/>
    <property type="match status" value="1"/>
</dbReference>
<dbReference type="SUPFAM" id="SSF48371">
    <property type="entry name" value="ARM repeat"/>
    <property type="match status" value="1"/>
</dbReference>
<dbReference type="SUPFAM" id="SSF56112">
    <property type="entry name" value="Protein kinase-like (PK-like)"/>
    <property type="match status" value="1"/>
</dbReference>
<dbReference type="PROSITE" id="PS51189">
    <property type="entry name" value="FAT"/>
    <property type="match status" value="1"/>
</dbReference>
<dbReference type="PROSITE" id="PS51190">
    <property type="entry name" value="FATC"/>
    <property type="match status" value="1"/>
</dbReference>
<dbReference type="PROSITE" id="PS00915">
    <property type="entry name" value="PI3_4_KINASE_1"/>
    <property type="match status" value="1"/>
</dbReference>
<dbReference type="PROSITE" id="PS00916">
    <property type="entry name" value="PI3_4_KINASE_2"/>
    <property type="match status" value="1"/>
</dbReference>
<dbReference type="PROSITE" id="PS50290">
    <property type="entry name" value="PI3_4_KINASE_3"/>
    <property type="match status" value="1"/>
</dbReference>
<evidence type="ECO:0000250" key="1"/>
<evidence type="ECO:0000255" key="2">
    <source>
        <dbReference type="PROSITE-ProRule" id="PRU00269"/>
    </source>
</evidence>
<evidence type="ECO:0000255" key="3">
    <source>
        <dbReference type="PROSITE-ProRule" id="PRU00534"/>
    </source>
</evidence>
<evidence type="ECO:0000255" key="4">
    <source>
        <dbReference type="PROSITE-ProRule" id="PRU00535"/>
    </source>
</evidence>
<evidence type="ECO:0000305" key="5"/>
<comment type="function">
    <text evidence="1">Serine/threonine protein kinase which activates checkpoint signaling upon genotoxic stresses such as ionizing radiation (IR), ultraviolet light (UV), or DNA replication stalling, thereby acting as a DNA damage sensor. Recognizes the substrate consensus sequence [ST]-Q. Recruited to DNA lesions in order to initiate the DNA repair by homologous recombination. Phosphorylates histone H2A to form H2AS128ph (gamma-H2A) at sites of DNA damage, also involved in the regulation of DNA damage response mechanism. Required for cell growth and meiotic recombination (By similarity).</text>
</comment>
<comment type="catalytic activity">
    <reaction>
        <text>L-seryl-[protein] + ATP = O-phospho-L-seryl-[protein] + ADP + H(+)</text>
        <dbReference type="Rhea" id="RHEA:17989"/>
        <dbReference type="Rhea" id="RHEA-COMP:9863"/>
        <dbReference type="Rhea" id="RHEA-COMP:11604"/>
        <dbReference type="ChEBI" id="CHEBI:15378"/>
        <dbReference type="ChEBI" id="CHEBI:29999"/>
        <dbReference type="ChEBI" id="CHEBI:30616"/>
        <dbReference type="ChEBI" id="CHEBI:83421"/>
        <dbReference type="ChEBI" id="CHEBI:456216"/>
        <dbReference type="EC" id="2.7.11.1"/>
    </reaction>
</comment>
<comment type="catalytic activity">
    <reaction>
        <text>L-threonyl-[protein] + ATP = O-phospho-L-threonyl-[protein] + ADP + H(+)</text>
        <dbReference type="Rhea" id="RHEA:46608"/>
        <dbReference type="Rhea" id="RHEA-COMP:11060"/>
        <dbReference type="Rhea" id="RHEA-COMP:11605"/>
        <dbReference type="ChEBI" id="CHEBI:15378"/>
        <dbReference type="ChEBI" id="CHEBI:30013"/>
        <dbReference type="ChEBI" id="CHEBI:30616"/>
        <dbReference type="ChEBI" id="CHEBI:61977"/>
        <dbReference type="ChEBI" id="CHEBI:456216"/>
        <dbReference type="EC" id="2.7.11.1"/>
    </reaction>
</comment>
<comment type="subcellular location">
    <subcellularLocation>
        <location evidence="1">Nucleus</location>
    </subcellularLocation>
    <text evidence="1">Localizes to nuclear DNA repair foci in response to DNA double strand breaks.</text>
</comment>
<comment type="similarity">
    <text evidence="5">Belongs to the PI3/PI4-kinase family. ATM subfamily.</text>
</comment>
<feature type="chain" id="PRO_0000227708" description="Serine/threonine-protein kinase MEC1">
    <location>
        <begin position="1"/>
        <end position="2324"/>
    </location>
</feature>
<feature type="domain" description="FAT" evidence="3">
    <location>
        <begin position="1349"/>
        <end position="1901"/>
    </location>
</feature>
<feature type="domain" description="PI3K/PI4K catalytic" evidence="2">
    <location>
        <begin position="2005"/>
        <end position="2308"/>
    </location>
</feature>
<feature type="domain" description="FATC" evidence="3 4">
    <location>
        <begin position="2292"/>
        <end position="2324"/>
    </location>
</feature>
<feature type="region of interest" description="G-loop" evidence="2">
    <location>
        <begin position="2011"/>
        <end position="2017"/>
    </location>
</feature>
<feature type="region of interest" description="Catalytic loop" evidence="2">
    <location>
        <begin position="2177"/>
        <end position="2185"/>
    </location>
</feature>
<feature type="region of interest" description="Activation loop" evidence="2">
    <location>
        <begin position="2197"/>
        <end position="2221"/>
    </location>
</feature>
<proteinExistence type="inferred from homology"/>
<keyword id="KW-0067">ATP-binding</keyword>
<keyword id="KW-0156">Chromatin regulator</keyword>
<keyword id="KW-0227">DNA damage</keyword>
<keyword id="KW-0234">DNA repair</keyword>
<keyword id="KW-0418">Kinase</keyword>
<keyword id="KW-0469">Meiosis</keyword>
<keyword id="KW-0547">Nucleotide-binding</keyword>
<keyword id="KW-0539">Nucleus</keyword>
<keyword id="KW-1185">Reference proteome</keyword>
<keyword id="KW-0723">Serine/threonine-protein kinase</keyword>
<keyword id="KW-0808">Transferase</keyword>
<accession>Q75DB8</accession>
<reference key="1">
    <citation type="journal article" date="2004" name="Science">
        <title>The Ashbya gossypii genome as a tool for mapping the ancient Saccharomyces cerevisiae genome.</title>
        <authorList>
            <person name="Dietrich F.S."/>
            <person name="Voegeli S."/>
            <person name="Brachat S."/>
            <person name="Lerch A."/>
            <person name="Gates K."/>
            <person name="Steiner S."/>
            <person name="Mohr C."/>
            <person name="Poehlmann R."/>
            <person name="Luedi P."/>
            <person name="Choi S."/>
            <person name="Wing R.A."/>
            <person name="Flavier A."/>
            <person name="Gaffney T.D."/>
            <person name="Philippsen P."/>
        </authorList>
    </citation>
    <scope>NUCLEOTIDE SEQUENCE [LARGE SCALE GENOMIC DNA]</scope>
    <source>
        <strain>ATCC 10895 / CBS 109.51 / FGSC 9923 / NRRL Y-1056</strain>
    </source>
</reference>
<reference key="2">
    <citation type="journal article" date="2013" name="G3 (Bethesda)">
        <title>Genomes of Ashbya fungi isolated from insects reveal four mating-type loci, numerous translocations, lack of transposons, and distinct gene duplications.</title>
        <authorList>
            <person name="Dietrich F.S."/>
            <person name="Voegeli S."/>
            <person name="Kuo S."/>
            <person name="Philippsen P."/>
        </authorList>
    </citation>
    <scope>GENOME REANNOTATION</scope>
    <scope>SEQUENCE REVISION TO 609; 628; 983; 1610-1622; 1630 AND 1642-1647</scope>
    <source>
        <strain>ATCC 10895 / CBS 109.51 / FGSC 9923 / NRRL Y-1056</strain>
    </source>
</reference>
<organism>
    <name type="scientific">Eremothecium gossypii (strain ATCC 10895 / CBS 109.51 / FGSC 9923 / NRRL Y-1056)</name>
    <name type="common">Yeast</name>
    <name type="synonym">Ashbya gossypii</name>
    <dbReference type="NCBI Taxonomy" id="284811"/>
    <lineage>
        <taxon>Eukaryota</taxon>
        <taxon>Fungi</taxon>
        <taxon>Dikarya</taxon>
        <taxon>Ascomycota</taxon>
        <taxon>Saccharomycotina</taxon>
        <taxon>Saccharomycetes</taxon>
        <taxon>Saccharomycetales</taxon>
        <taxon>Saccharomycetaceae</taxon>
        <taxon>Eremothecium</taxon>
    </lineage>
</organism>
<name>ATR_EREGS</name>
<protein>
    <recommendedName>
        <fullName>Serine/threonine-protein kinase MEC1</fullName>
        <ecNumber>2.7.11.1</ecNumber>
    </recommendedName>
    <alternativeName>
        <fullName>ATR homolog</fullName>
    </alternativeName>
    <alternativeName>
        <fullName>DNA-damage checkpoint kinase MEC1</fullName>
    </alternativeName>
    <alternativeName>
        <fullName>Mitosis entry checkpoint protein 1</fullName>
    </alternativeName>
</protein>